<accession>C1AL41</accession>
<name>RS3_MYCBT</name>
<dbReference type="EMBL" id="AP010918">
    <property type="protein sequence ID" value="BAH25020.1"/>
    <property type="molecule type" value="Genomic_DNA"/>
</dbReference>
<dbReference type="RefSeq" id="WP_003403590.1">
    <property type="nucleotide sequence ID" value="NZ_CP014566.1"/>
</dbReference>
<dbReference type="SMR" id="C1AL41"/>
<dbReference type="GeneID" id="45424672"/>
<dbReference type="KEGG" id="mbt:JTY_0727"/>
<dbReference type="HOGENOM" id="CLU_058591_0_0_11"/>
<dbReference type="GO" id="GO:0022627">
    <property type="term" value="C:cytosolic small ribosomal subunit"/>
    <property type="evidence" value="ECO:0007669"/>
    <property type="project" value="TreeGrafter"/>
</dbReference>
<dbReference type="GO" id="GO:0003729">
    <property type="term" value="F:mRNA binding"/>
    <property type="evidence" value="ECO:0007669"/>
    <property type="project" value="UniProtKB-UniRule"/>
</dbReference>
<dbReference type="GO" id="GO:0019843">
    <property type="term" value="F:rRNA binding"/>
    <property type="evidence" value="ECO:0007669"/>
    <property type="project" value="UniProtKB-UniRule"/>
</dbReference>
<dbReference type="GO" id="GO:0003735">
    <property type="term" value="F:structural constituent of ribosome"/>
    <property type="evidence" value="ECO:0007669"/>
    <property type="project" value="InterPro"/>
</dbReference>
<dbReference type="GO" id="GO:0006412">
    <property type="term" value="P:translation"/>
    <property type="evidence" value="ECO:0007669"/>
    <property type="project" value="UniProtKB-UniRule"/>
</dbReference>
<dbReference type="CDD" id="cd02412">
    <property type="entry name" value="KH-II_30S_S3"/>
    <property type="match status" value="1"/>
</dbReference>
<dbReference type="FunFam" id="3.30.1140.32:FF:000002">
    <property type="entry name" value="30S ribosomal protein S3"/>
    <property type="match status" value="1"/>
</dbReference>
<dbReference type="FunFam" id="3.30.300.20:FF:000001">
    <property type="entry name" value="30S ribosomal protein S3"/>
    <property type="match status" value="1"/>
</dbReference>
<dbReference type="Gene3D" id="3.30.300.20">
    <property type="match status" value="1"/>
</dbReference>
<dbReference type="Gene3D" id="3.30.1140.32">
    <property type="entry name" value="Ribosomal protein S3, C-terminal domain"/>
    <property type="match status" value="1"/>
</dbReference>
<dbReference type="HAMAP" id="MF_01309_B">
    <property type="entry name" value="Ribosomal_uS3_B"/>
    <property type="match status" value="1"/>
</dbReference>
<dbReference type="InterPro" id="IPR004087">
    <property type="entry name" value="KH_dom"/>
</dbReference>
<dbReference type="InterPro" id="IPR015946">
    <property type="entry name" value="KH_dom-like_a/b"/>
</dbReference>
<dbReference type="InterPro" id="IPR004044">
    <property type="entry name" value="KH_dom_type_2"/>
</dbReference>
<dbReference type="InterPro" id="IPR009019">
    <property type="entry name" value="KH_sf_prok-type"/>
</dbReference>
<dbReference type="InterPro" id="IPR036419">
    <property type="entry name" value="Ribosomal_S3_C_sf"/>
</dbReference>
<dbReference type="InterPro" id="IPR005704">
    <property type="entry name" value="Ribosomal_uS3_bac-typ"/>
</dbReference>
<dbReference type="InterPro" id="IPR001351">
    <property type="entry name" value="Ribosomal_uS3_C"/>
</dbReference>
<dbReference type="InterPro" id="IPR018280">
    <property type="entry name" value="Ribosomal_uS3_CS"/>
</dbReference>
<dbReference type="NCBIfam" id="TIGR01009">
    <property type="entry name" value="rpsC_bact"/>
    <property type="match status" value="1"/>
</dbReference>
<dbReference type="PANTHER" id="PTHR11760">
    <property type="entry name" value="30S/40S RIBOSOMAL PROTEIN S3"/>
    <property type="match status" value="1"/>
</dbReference>
<dbReference type="PANTHER" id="PTHR11760:SF19">
    <property type="entry name" value="SMALL RIBOSOMAL SUBUNIT PROTEIN US3C"/>
    <property type="match status" value="1"/>
</dbReference>
<dbReference type="Pfam" id="PF07650">
    <property type="entry name" value="KH_2"/>
    <property type="match status" value="1"/>
</dbReference>
<dbReference type="Pfam" id="PF00189">
    <property type="entry name" value="Ribosomal_S3_C"/>
    <property type="match status" value="1"/>
</dbReference>
<dbReference type="SMART" id="SM00322">
    <property type="entry name" value="KH"/>
    <property type="match status" value="1"/>
</dbReference>
<dbReference type="SUPFAM" id="SSF54814">
    <property type="entry name" value="Prokaryotic type KH domain (KH-domain type II)"/>
    <property type="match status" value="1"/>
</dbReference>
<dbReference type="SUPFAM" id="SSF54821">
    <property type="entry name" value="Ribosomal protein S3 C-terminal domain"/>
    <property type="match status" value="1"/>
</dbReference>
<dbReference type="PROSITE" id="PS50823">
    <property type="entry name" value="KH_TYPE_2"/>
    <property type="match status" value="1"/>
</dbReference>
<dbReference type="PROSITE" id="PS00548">
    <property type="entry name" value="RIBOSOMAL_S3"/>
    <property type="match status" value="1"/>
</dbReference>
<reference key="1">
    <citation type="journal article" date="2009" name="Vaccine">
        <title>Whole genome sequence analysis of Mycobacterium bovis bacillus Calmette-Guerin (BCG) Tokyo 172: a comparative study of BCG vaccine substrains.</title>
        <authorList>
            <person name="Seki M."/>
            <person name="Honda I."/>
            <person name="Fujita I."/>
            <person name="Yano I."/>
            <person name="Yamamoto S."/>
            <person name="Koyama A."/>
        </authorList>
    </citation>
    <scope>NUCLEOTIDE SEQUENCE [LARGE SCALE GENOMIC DNA]</scope>
    <source>
        <strain>BCG / Tokyo 172 / ATCC 35737 / TMC 1019</strain>
    </source>
</reference>
<protein>
    <recommendedName>
        <fullName evidence="1">Small ribosomal subunit protein uS3</fullName>
    </recommendedName>
    <alternativeName>
        <fullName evidence="3">30S ribosomal protein S3</fullName>
    </alternativeName>
</protein>
<keyword id="KW-0687">Ribonucleoprotein</keyword>
<keyword id="KW-0689">Ribosomal protein</keyword>
<keyword id="KW-0694">RNA-binding</keyword>
<keyword id="KW-0699">rRNA-binding</keyword>
<gene>
    <name evidence="1" type="primary">rpsC</name>
    <name type="ordered locus">JTY_0727</name>
</gene>
<sequence>MGQKINPHGFRLGITTDWKSRWYADKQYAEYVKEDVAIRRLLSSGLERAGIADVEIERTRDRVRVDIHTARPGIVIGRRGTEADRIRADLEKLTGKQVQLNILEVKNPESQAQLVAQGVAEQLSNRVAFRRAMRKAIQSAMRQPNVKGIRVQCSGRLGGAEMSRSEFYREGRVPLHTLRADIDYGLYEAKTTFGRIGVKVWIYKGDIVGGKRELAAAAPAGADRPRRERPSGTRPRRSGASGTTATGTDAGRAAGGEEAAPDAAAPVEAQSTES</sequence>
<evidence type="ECO:0000255" key="1">
    <source>
        <dbReference type="HAMAP-Rule" id="MF_01309"/>
    </source>
</evidence>
<evidence type="ECO:0000256" key="2">
    <source>
        <dbReference type="SAM" id="MobiDB-lite"/>
    </source>
</evidence>
<evidence type="ECO:0000305" key="3"/>
<feature type="chain" id="PRO_1000165501" description="Small ribosomal subunit protein uS3">
    <location>
        <begin position="1"/>
        <end position="274"/>
    </location>
</feature>
<feature type="domain" description="KH type-2" evidence="1">
    <location>
        <begin position="38"/>
        <end position="106"/>
    </location>
</feature>
<feature type="region of interest" description="Disordered" evidence="2">
    <location>
        <begin position="215"/>
        <end position="274"/>
    </location>
</feature>
<feature type="compositionally biased region" description="Low complexity" evidence="2">
    <location>
        <begin position="238"/>
        <end position="266"/>
    </location>
</feature>
<comment type="function">
    <text evidence="1">Binds the lower part of the 30S subunit head. Binds mRNA in the 70S ribosome, positioning it for translation.</text>
</comment>
<comment type="subunit">
    <text evidence="1">Part of the 30S ribosomal subunit. Forms a tight complex with proteins S10 and S14.</text>
</comment>
<comment type="similarity">
    <text evidence="1">Belongs to the universal ribosomal protein uS3 family.</text>
</comment>
<organism>
    <name type="scientific">Mycobacterium bovis (strain BCG / Tokyo 172 / ATCC 35737 / TMC 1019)</name>
    <dbReference type="NCBI Taxonomy" id="561275"/>
    <lineage>
        <taxon>Bacteria</taxon>
        <taxon>Bacillati</taxon>
        <taxon>Actinomycetota</taxon>
        <taxon>Actinomycetes</taxon>
        <taxon>Mycobacteriales</taxon>
        <taxon>Mycobacteriaceae</taxon>
        <taxon>Mycobacterium</taxon>
        <taxon>Mycobacterium tuberculosis complex</taxon>
    </lineage>
</organism>
<proteinExistence type="inferred from homology"/>